<reference key="1">
    <citation type="journal article" date="1990" name="Curr. Top. Microbiol. Immunol.">
        <title>Analysis of the protein-coding content of the sequence of human cytomegalovirus strain AD169.</title>
        <authorList>
            <person name="Chee M.S."/>
            <person name="Bankier A.T."/>
            <person name="Beck S."/>
            <person name="Bohni R."/>
            <person name="Brown C.M."/>
            <person name="Cerny R."/>
            <person name="Horsnell T."/>
            <person name="Hutchison C.A. III"/>
            <person name="Kouzarides T."/>
            <person name="Martignetti J.A."/>
            <person name="Preddie E."/>
            <person name="Satchwell S.C."/>
            <person name="Tomlinson P."/>
            <person name="Weston K.M."/>
            <person name="Barrell B.G."/>
        </authorList>
    </citation>
    <scope>NUCLEOTIDE SEQUENCE [LARGE SCALE GENOMIC DNA]</scope>
</reference>
<organism>
    <name type="scientific">Human cytomegalovirus (strain AD169)</name>
    <name type="common">HHV-5</name>
    <name type="synonym">Human herpesvirus 5</name>
    <dbReference type="NCBI Taxonomy" id="10360"/>
    <lineage>
        <taxon>Viruses</taxon>
        <taxon>Duplodnaviria</taxon>
        <taxon>Heunggongvirae</taxon>
        <taxon>Peploviricota</taxon>
        <taxon>Herviviricetes</taxon>
        <taxon>Herpesvirales</taxon>
        <taxon>Orthoherpesviridae</taxon>
        <taxon>Betaherpesvirinae</taxon>
        <taxon>Cytomegalovirus</taxon>
        <taxon>Cytomegalovirus humanbeta5</taxon>
        <taxon>Human cytomegalovirus</taxon>
    </lineage>
</organism>
<dbReference type="EMBL" id="X17403">
    <property type="protein sequence ID" value="CAA35294.1"/>
    <property type="molecule type" value="Genomic_DNA"/>
</dbReference>
<dbReference type="PIR" id="S09897">
    <property type="entry name" value="S09897"/>
</dbReference>
<dbReference type="Proteomes" id="UP000008991">
    <property type="component" value="Segment"/>
</dbReference>
<dbReference type="InterPro" id="IPR035282">
    <property type="entry name" value="DUF5429"/>
</dbReference>
<dbReference type="Pfam" id="PF17494">
    <property type="entry name" value="DUF5429"/>
    <property type="match status" value="1"/>
</dbReference>
<proteinExistence type="predicted"/>
<name>UL131_HCMVA</name>
<sequence>MCMMSHNKAFFLSLQHAAVSGVAVCLSVRRGAGSVPAGNRGKKTIITEYRITGTRALARCPTKPVTSMWNSSWTSR</sequence>
<protein>
    <recommendedName>
        <fullName>Uncharacterized protein UL131</fullName>
    </recommendedName>
</protein>
<feature type="chain" id="PRO_0000115366" description="Uncharacterized protein UL131">
    <location>
        <begin position="1"/>
        <end position="76"/>
    </location>
</feature>
<organismHost>
    <name type="scientific">Homo sapiens</name>
    <name type="common">Human</name>
    <dbReference type="NCBI Taxonomy" id="9606"/>
</organismHost>
<gene>
    <name type="primary">UL131</name>
</gene>
<accession>P16773</accession>